<sequence length="488" mass="50559">MSSPSLVELKAILRLAGPLIAAQLAYVAMVFTDTVMMGKLGPDALAAGGLGAVSYAFVSTFCVGVVAAVGNLVAIRHGCDDAAGAAAAARSGLWVGAALALAAGLLLWNLRPLLLVFGQAPQTVDGAMQFLHSLTFALPGYMAFMVLRGFTSAIDRAGPVMAISVLGALANLALNYSFIEGLFGLPRLGLAGIGLVTALVMNCMPLLLALYIRLQPAYAEYSLLRGLGRPQRAMVEEILRLGLPIGGTYAVESGMFTVATLCMGIIGDHALAAHQIAIQAVYVAFMVPVGLSYATTYRIGQHFGAGRLLEARRAGRVGIGFGALCMLLFAGLFWWMPEAIIGLFLDRDAPANREVAAMAVSLLAIAAWFELFDGTQNVAMGAIRGLKDARTTFLVGLACYWLVGVPLACLLAFAAGWGAAGVWWGLAGGLACAAIGLTLAFEWKTARLLPKATASEASALNCRAAGRGAPSARLCPGNAPVPPTAAAD</sequence>
<keyword id="KW-0050">Antiport</keyword>
<keyword id="KW-0997">Cell inner membrane</keyword>
<keyword id="KW-1003">Cell membrane</keyword>
<keyword id="KW-0406">Ion transport</keyword>
<keyword id="KW-0472">Membrane</keyword>
<keyword id="KW-1185">Reference proteome</keyword>
<keyword id="KW-0812">Transmembrane</keyword>
<keyword id="KW-1133">Transmembrane helix</keyword>
<keyword id="KW-0813">Transport</keyword>
<name>NORM_PSEAE</name>
<protein>
    <recommendedName>
        <fullName>Probable multidrug resistance protein NorM</fullName>
    </recommendedName>
    <alternativeName>
        <fullName>Multidrug-efflux transporter</fullName>
    </alternativeName>
</protein>
<gene>
    <name type="primary">norM</name>
    <name type="ordered locus">PA5294</name>
</gene>
<feature type="chain" id="PRO_0000164232" description="Probable multidrug resistance protein NorM">
    <location>
        <begin position="1"/>
        <end position="488"/>
    </location>
</feature>
<feature type="transmembrane region" description="Helical" evidence="2">
    <location>
        <begin position="11"/>
        <end position="31"/>
    </location>
</feature>
<feature type="transmembrane region" description="Helical" evidence="2">
    <location>
        <begin position="55"/>
        <end position="75"/>
    </location>
</feature>
<feature type="transmembrane region" description="Helical" evidence="2">
    <location>
        <begin position="97"/>
        <end position="117"/>
    </location>
</feature>
<feature type="transmembrane region" description="Helical" evidence="2">
    <location>
        <begin position="127"/>
        <end position="147"/>
    </location>
</feature>
<feature type="transmembrane region" description="Helical" evidence="2">
    <location>
        <begin position="159"/>
        <end position="179"/>
    </location>
</feature>
<feature type="transmembrane region" description="Helical" evidence="2">
    <location>
        <begin position="190"/>
        <end position="210"/>
    </location>
</feature>
<feature type="transmembrane region" description="Helical" evidence="2">
    <location>
        <begin position="247"/>
        <end position="267"/>
    </location>
</feature>
<feature type="transmembrane region" description="Helical" evidence="2">
    <location>
        <begin position="271"/>
        <end position="291"/>
    </location>
</feature>
<feature type="transmembrane region" description="Helical" evidence="2">
    <location>
        <begin position="317"/>
        <end position="337"/>
    </location>
</feature>
<feature type="transmembrane region" description="Helical" evidence="2">
    <location>
        <begin position="355"/>
        <end position="375"/>
    </location>
</feature>
<feature type="transmembrane region" description="Helical" evidence="2">
    <location>
        <begin position="393"/>
        <end position="413"/>
    </location>
</feature>
<feature type="transmembrane region" description="Helical" evidence="2">
    <location>
        <begin position="421"/>
        <end position="441"/>
    </location>
</feature>
<accession>Q9HTR0</accession>
<comment type="function">
    <text evidence="1">Multidrug efflux pump.</text>
</comment>
<comment type="subcellular location">
    <subcellularLocation>
        <location evidence="1">Cell inner membrane</location>
        <topology evidence="1">Multi-pass membrane protein</topology>
    </subcellularLocation>
</comment>
<comment type="similarity">
    <text evidence="3">Belongs to the multi antimicrobial extrusion (MATE) (TC 2.A.66.1) family.</text>
</comment>
<dbReference type="EMBL" id="AE004091">
    <property type="protein sequence ID" value="AAG08679.1"/>
    <property type="molecule type" value="Genomic_DNA"/>
</dbReference>
<dbReference type="PIR" id="A82984">
    <property type="entry name" value="A82984"/>
</dbReference>
<dbReference type="RefSeq" id="NP_253981.1">
    <property type="nucleotide sequence ID" value="NC_002516.2"/>
</dbReference>
<dbReference type="RefSeq" id="WP_003114349.1">
    <property type="nucleotide sequence ID" value="NZ_QZGE01000020.1"/>
</dbReference>
<dbReference type="SMR" id="Q9HTR0"/>
<dbReference type="STRING" id="208964.PA5294"/>
<dbReference type="PaxDb" id="208964-PA5294"/>
<dbReference type="GeneID" id="880556"/>
<dbReference type="KEGG" id="pae:PA5294"/>
<dbReference type="PATRIC" id="fig|208964.12.peg.5548"/>
<dbReference type="PseudoCAP" id="PA5294"/>
<dbReference type="HOGENOM" id="CLU_012893_6_3_6"/>
<dbReference type="InParanoid" id="Q9HTR0"/>
<dbReference type="OrthoDB" id="9780160at2"/>
<dbReference type="PhylomeDB" id="Q9HTR0"/>
<dbReference type="BioCyc" id="PAER208964:G1FZ6-5415-MONOMER"/>
<dbReference type="Proteomes" id="UP000002438">
    <property type="component" value="Chromosome"/>
</dbReference>
<dbReference type="GO" id="GO:0016020">
    <property type="term" value="C:membrane"/>
    <property type="evidence" value="ECO:0000318"/>
    <property type="project" value="GO_Central"/>
</dbReference>
<dbReference type="GO" id="GO:0098567">
    <property type="term" value="C:periplasmic side of plasma membrane"/>
    <property type="evidence" value="ECO:0000250"/>
    <property type="project" value="PseudoCAP"/>
</dbReference>
<dbReference type="GO" id="GO:0005886">
    <property type="term" value="C:plasma membrane"/>
    <property type="evidence" value="ECO:0000250"/>
    <property type="project" value="PseudoCAP"/>
</dbReference>
<dbReference type="GO" id="GO:0015297">
    <property type="term" value="F:antiporter activity"/>
    <property type="evidence" value="ECO:0007669"/>
    <property type="project" value="UniProtKB-KW"/>
</dbReference>
<dbReference type="GO" id="GO:0022857">
    <property type="term" value="F:transmembrane transporter activity"/>
    <property type="evidence" value="ECO:0000318"/>
    <property type="project" value="GO_Central"/>
</dbReference>
<dbReference type="GO" id="GO:0042910">
    <property type="term" value="F:xenobiotic transmembrane transporter activity"/>
    <property type="evidence" value="ECO:0007669"/>
    <property type="project" value="InterPro"/>
</dbReference>
<dbReference type="GO" id="GO:0006811">
    <property type="term" value="P:monoatomic ion transport"/>
    <property type="evidence" value="ECO:0007669"/>
    <property type="project" value="UniProtKB-KW"/>
</dbReference>
<dbReference type="CDD" id="cd13131">
    <property type="entry name" value="MATE_NorM_like"/>
    <property type="match status" value="1"/>
</dbReference>
<dbReference type="InterPro" id="IPR002528">
    <property type="entry name" value="MATE_fam"/>
</dbReference>
<dbReference type="InterPro" id="IPR050222">
    <property type="entry name" value="MATE_MdtK"/>
</dbReference>
<dbReference type="InterPro" id="IPR048279">
    <property type="entry name" value="MdtK-like"/>
</dbReference>
<dbReference type="NCBIfam" id="TIGR00797">
    <property type="entry name" value="matE"/>
    <property type="match status" value="1"/>
</dbReference>
<dbReference type="NCBIfam" id="NF001214">
    <property type="entry name" value="PRK00187.1"/>
    <property type="match status" value="1"/>
</dbReference>
<dbReference type="PANTHER" id="PTHR43298:SF2">
    <property type="entry name" value="FMN_FAD EXPORTER YEEO-RELATED"/>
    <property type="match status" value="1"/>
</dbReference>
<dbReference type="PANTHER" id="PTHR43298">
    <property type="entry name" value="MULTIDRUG RESISTANCE PROTEIN NORM-RELATED"/>
    <property type="match status" value="1"/>
</dbReference>
<dbReference type="Pfam" id="PF01554">
    <property type="entry name" value="MatE"/>
    <property type="match status" value="2"/>
</dbReference>
<dbReference type="PIRSF" id="PIRSF006603">
    <property type="entry name" value="DinF"/>
    <property type="match status" value="1"/>
</dbReference>
<proteinExistence type="inferred from homology"/>
<evidence type="ECO:0000250" key="1"/>
<evidence type="ECO:0000255" key="2"/>
<evidence type="ECO:0000305" key="3"/>
<organism>
    <name type="scientific">Pseudomonas aeruginosa (strain ATCC 15692 / DSM 22644 / CIP 104116 / JCM 14847 / LMG 12228 / 1C / PRS 101 / PAO1)</name>
    <dbReference type="NCBI Taxonomy" id="208964"/>
    <lineage>
        <taxon>Bacteria</taxon>
        <taxon>Pseudomonadati</taxon>
        <taxon>Pseudomonadota</taxon>
        <taxon>Gammaproteobacteria</taxon>
        <taxon>Pseudomonadales</taxon>
        <taxon>Pseudomonadaceae</taxon>
        <taxon>Pseudomonas</taxon>
    </lineage>
</organism>
<reference key="1">
    <citation type="journal article" date="2000" name="Nature">
        <title>Complete genome sequence of Pseudomonas aeruginosa PAO1, an opportunistic pathogen.</title>
        <authorList>
            <person name="Stover C.K."/>
            <person name="Pham X.-Q.T."/>
            <person name="Erwin A.L."/>
            <person name="Mizoguchi S.D."/>
            <person name="Warrener P."/>
            <person name="Hickey M.J."/>
            <person name="Brinkman F.S.L."/>
            <person name="Hufnagle W.O."/>
            <person name="Kowalik D.J."/>
            <person name="Lagrou M."/>
            <person name="Garber R.L."/>
            <person name="Goltry L."/>
            <person name="Tolentino E."/>
            <person name="Westbrock-Wadman S."/>
            <person name="Yuan Y."/>
            <person name="Brody L.L."/>
            <person name="Coulter S.N."/>
            <person name="Folger K.R."/>
            <person name="Kas A."/>
            <person name="Larbig K."/>
            <person name="Lim R.M."/>
            <person name="Smith K.A."/>
            <person name="Spencer D.H."/>
            <person name="Wong G.K.-S."/>
            <person name="Wu Z."/>
            <person name="Paulsen I.T."/>
            <person name="Reizer J."/>
            <person name="Saier M.H. Jr."/>
            <person name="Hancock R.E.W."/>
            <person name="Lory S."/>
            <person name="Olson M.V."/>
        </authorList>
    </citation>
    <scope>NUCLEOTIDE SEQUENCE [LARGE SCALE GENOMIC DNA]</scope>
    <source>
        <strain>ATCC 15692 / DSM 22644 / CIP 104116 / JCM 14847 / LMG 12228 / 1C / PRS 101 / PAO1</strain>
    </source>
</reference>